<keyword id="KW-0328">Glycosyltransferase</keyword>
<keyword id="KW-0460">Magnesium</keyword>
<keyword id="KW-0665">Pyrimidine biosynthesis</keyword>
<keyword id="KW-1185">Reference proteome</keyword>
<keyword id="KW-0808">Transferase</keyword>
<comment type="function">
    <text evidence="1">Catalyzes the transfer of a ribosyl phosphate group from 5-phosphoribose 1-diphosphate to orotate, leading to the formation of orotidine monophosphate (OMP).</text>
</comment>
<comment type="catalytic activity">
    <reaction evidence="1">
        <text>orotidine 5'-phosphate + diphosphate = orotate + 5-phospho-alpha-D-ribose 1-diphosphate</text>
        <dbReference type="Rhea" id="RHEA:10380"/>
        <dbReference type="ChEBI" id="CHEBI:30839"/>
        <dbReference type="ChEBI" id="CHEBI:33019"/>
        <dbReference type="ChEBI" id="CHEBI:57538"/>
        <dbReference type="ChEBI" id="CHEBI:58017"/>
        <dbReference type="EC" id="2.4.2.10"/>
    </reaction>
</comment>
<comment type="cofactor">
    <cofactor evidence="1">
        <name>Mg(2+)</name>
        <dbReference type="ChEBI" id="CHEBI:18420"/>
    </cofactor>
</comment>
<comment type="pathway">
    <text evidence="1">Pyrimidine metabolism; UMP biosynthesis via de novo pathway; UMP from orotate: step 1/2.</text>
</comment>
<comment type="subunit">
    <text evidence="1">Homodimer.</text>
</comment>
<comment type="similarity">
    <text evidence="1">Belongs to the purine/pyrimidine phosphoribosyltransferase family. PyrE subfamily.</text>
</comment>
<gene>
    <name evidence="1" type="primary">pyrE</name>
    <name type="ordered locus">aq_1907</name>
</gene>
<protein>
    <recommendedName>
        <fullName evidence="1">Orotate phosphoribosyltransferase</fullName>
        <shortName evidence="1">OPRT</shortName>
        <shortName evidence="1">OPRTase</shortName>
        <ecNumber evidence="1">2.4.2.10</ecNumber>
    </recommendedName>
</protein>
<name>PYRE_AQUAE</name>
<feature type="chain" id="PRO_0000110663" description="Orotate phosphoribosyltransferase">
    <location>
        <begin position="1"/>
        <end position="183"/>
    </location>
</feature>
<feature type="binding site" evidence="1">
    <location>
        <position position="100"/>
    </location>
    <ligand>
        <name>5-phospho-alpha-D-ribose 1-diphosphate</name>
        <dbReference type="ChEBI" id="CHEBI:58017"/>
        <note>ligand shared between dimeric partners</note>
    </ligand>
</feature>
<feature type="binding site" description="in other chain" evidence="1">
    <location>
        <position position="101"/>
    </location>
    <ligand>
        <name>5-phospho-alpha-D-ribose 1-diphosphate</name>
        <dbReference type="ChEBI" id="CHEBI:58017"/>
        <note>ligand shared between dimeric partners</note>
    </ligand>
</feature>
<feature type="binding site" evidence="1">
    <location>
        <position position="104"/>
    </location>
    <ligand>
        <name>5-phospho-alpha-D-ribose 1-diphosphate</name>
        <dbReference type="ChEBI" id="CHEBI:58017"/>
        <note>ligand shared between dimeric partners</note>
    </ligand>
</feature>
<feature type="binding site" evidence="1">
    <location>
        <position position="106"/>
    </location>
    <ligand>
        <name>5-phospho-alpha-D-ribose 1-diphosphate</name>
        <dbReference type="ChEBI" id="CHEBI:58017"/>
        <note>ligand shared between dimeric partners</note>
    </ligand>
</feature>
<feature type="binding site" description="in other chain" evidence="1">
    <location>
        <begin position="126"/>
        <end position="134"/>
    </location>
    <ligand>
        <name>5-phospho-alpha-D-ribose 1-diphosphate</name>
        <dbReference type="ChEBI" id="CHEBI:58017"/>
        <note>ligand shared between dimeric partners</note>
    </ligand>
</feature>
<feature type="binding site" evidence="1">
    <location>
        <position position="130"/>
    </location>
    <ligand>
        <name>orotate</name>
        <dbReference type="ChEBI" id="CHEBI:30839"/>
    </ligand>
</feature>
<feature type="binding site" evidence="1">
    <location>
        <position position="158"/>
    </location>
    <ligand>
        <name>orotate</name>
        <dbReference type="ChEBI" id="CHEBI:30839"/>
    </ligand>
</feature>
<organism>
    <name type="scientific">Aquifex aeolicus (strain VF5)</name>
    <dbReference type="NCBI Taxonomy" id="224324"/>
    <lineage>
        <taxon>Bacteria</taxon>
        <taxon>Pseudomonadati</taxon>
        <taxon>Aquificota</taxon>
        <taxon>Aquificia</taxon>
        <taxon>Aquificales</taxon>
        <taxon>Aquificaceae</taxon>
        <taxon>Aquifex</taxon>
    </lineage>
</organism>
<evidence type="ECO:0000255" key="1">
    <source>
        <dbReference type="HAMAP-Rule" id="MF_01208"/>
    </source>
</evidence>
<dbReference type="EC" id="2.4.2.10" evidence="1"/>
<dbReference type="EMBL" id="AE000657">
    <property type="protein sequence ID" value="AAC07702.1"/>
    <property type="molecule type" value="Genomic_DNA"/>
</dbReference>
<dbReference type="PIR" id="B70464">
    <property type="entry name" value="B70464"/>
</dbReference>
<dbReference type="RefSeq" id="NP_214310.1">
    <property type="nucleotide sequence ID" value="NC_000918.1"/>
</dbReference>
<dbReference type="SMR" id="O67742"/>
<dbReference type="FunCoup" id="O67742">
    <property type="interactions" value="386"/>
</dbReference>
<dbReference type="STRING" id="224324.aq_1907"/>
<dbReference type="EnsemblBacteria" id="AAC07702">
    <property type="protein sequence ID" value="AAC07702"/>
    <property type="gene ID" value="aq_1907"/>
</dbReference>
<dbReference type="KEGG" id="aae:aq_1907"/>
<dbReference type="PATRIC" id="fig|224324.8.peg.1476"/>
<dbReference type="eggNOG" id="COG0461">
    <property type="taxonomic scope" value="Bacteria"/>
</dbReference>
<dbReference type="HOGENOM" id="CLU_074878_2_1_0"/>
<dbReference type="InParanoid" id="O67742"/>
<dbReference type="OrthoDB" id="9802134at2"/>
<dbReference type="UniPathway" id="UPA00070">
    <property type="reaction ID" value="UER00119"/>
</dbReference>
<dbReference type="Proteomes" id="UP000000798">
    <property type="component" value="Chromosome"/>
</dbReference>
<dbReference type="GO" id="GO:0000287">
    <property type="term" value="F:magnesium ion binding"/>
    <property type="evidence" value="ECO:0007669"/>
    <property type="project" value="UniProtKB-UniRule"/>
</dbReference>
<dbReference type="GO" id="GO:0004588">
    <property type="term" value="F:orotate phosphoribosyltransferase activity"/>
    <property type="evidence" value="ECO:0000318"/>
    <property type="project" value="GO_Central"/>
</dbReference>
<dbReference type="GO" id="GO:0044205">
    <property type="term" value="P:'de novo' UMP biosynthetic process"/>
    <property type="evidence" value="ECO:0007669"/>
    <property type="project" value="UniProtKB-UniRule"/>
</dbReference>
<dbReference type="GO" id="GO:0019856">
    <property type="term" value="P:pyrimidine nucleobase biosynthetic process"/>
    <property type="evidence" value="ECO:0000318"/>
    <property type="project" value="GO_Central"/>
</dbReference>
<dbReference type="GO" id="GO:0006222">
    <property type="term" value="P:UMP biosynthetic process"/>
    <property type="evidence" value="ECO:0000318"/>
    <property type="project" value="GO_Central"/>
</dbReference>
<dbReference type="CDD" id="cd06223">
    <property type="entry name" value="PRTases_typeI"/>
    <property type="match status" value="1"/>
</dbReference>
<dbReference type="FunFam" id="3.40.50.2020:FF:000029">
    <property type="entry name" value="Orotate phosphoribosyltransferase"/>
    <property type="match status" value="1"/>
</dbReference>
<dbReference type="Gene3D" id="3.40.50.2020">
    <property type="match status" value="1"/>
</dbReference>
<dbReference type="HAMAP" id="MF_01208">
    <property type="entry name" value="PyrE"/>
    <property type="match status" value="1"/>
</dbReference>
<dbReference type="InterPro" id="IPR023031">
    <property type="entry name" value="OPRT"/>
</dbReference>
<dbReference type="InterPro" id="IPR004467">
    <property type="entry name" value="Or_phspho_trans_dom"/>
</dbReference>
<dbReference type="InterPro" id="IPR000836">
    <property type="entry name" value="PRibTrfase_dom"/>
</dbReference>
<dbReference type="InterPro" id="IPR029057">
    <property type="entry name" value="PRTase-like"/>
</dbReference>
<dbReference type="NCBIfam" id="TIGR00336">
    <property type="entry name" value="pyrE"/>
    <property type="match status" value="1"/>
</dbReference>
<dbReference type="PANTHER" id="PTHR19278">
    <property type="entry name" value="OROTATE PHOSPHORIBOSYLTRANSFERASE"/>
    <property type="match status" value="1"/>
</dbReference>
<dbReference type="PANTHER" id="PTHR19278:SF9">
    <property type="entry name" value="URIDINE 5'-MONOPHOSPHATE SYNTHASE"/>
    <property type="match status" value="1"/>
</dbReference>
<dbReference type="SUPFAM" id="SSF53271">
    <property type="entry name" value="PRTase-like"/>
    <property type="match status" value="1"/>
</dbReference>
<sequence>MLMLEREKLARLIKKRSLKVADEPVFKLSSGKLSRYYVDLKQITFDPEGDYLIGKAMYELVKEFNPDACGGLTLGADPIAYAIAFVSLMDSNPIKPFVVRKEPKGHGMKRQIEGLLNPGERVAVLEDVVTTGSSALKAVKACREYGLEVIGVFAVVDREEGGRENIEKEGIPLYSLFKLSELL</sequence>
<accession>O67742</accession>
<proteinExistence type="inferred from homology"/>
<reference key="1">
    <citation type="journal article" date="1998" name="Nature">
        <title>The complete genome of the hyperthermophilic bacterium Aquifex aeolicus.</title>
        <authorList>
            <person name="Deckert G."/>
            <person name="Warren P.V."/>
            <person name="Gaasterland T."/>
            <person name="Young W.G."/>
            <person name="Lenox A.L."/>
            <person name="Graham D.E."/>
            <person name="Overbeek R."/>
            <person name="Snead M.A."/>
            <person name="Keller M."/>
            <person name="Aujay M."/>
            <person name="Huber R."/>
            <person name="Feldman R.A."/>
            <person name="Short J.M."/>
            <person name="Olsen G.J."/>
            <person name="Swanson R.V."/>
        </authorList>
    </citation>
    <scope>NUCLEOTIDE SEQUENCE [LARGE SCALE GENOMIC DNA]</scope>
    <source>
        <strain>VF5</strain>
    </source>
</reference>